<protein>
    <recommendedName>
        <fullName evidence="1">Small ribosomal subunit protein uS5</fullName>
    </recommendedName>
    <alternativeName>
        <fullName evidence="2">30S ribosomal protein S5</fullName>
    </alternativeName>
</protein>
<proteinExistence type="inferred from homology"/>
<sequence length="153" mass="16538">MTERKGMEEINREEFQEVVVNIGRVTKVVKGGRRFRFNALVVVGNKNGLVGFGLGKAKEVPDAIKKAVDDAFKNLIHVTIKGTTIAHDIEHKYNASRILLKPASEGTGVIAGGSTRPIVELAGIKDILTKSLGSNNPYNVVRATFDALAKIKA</sequence>
<accession>B2UV65</accession>
<organism>
    <name type="scientific">Helicobacter pylori (strain Shi470)</name>
    <dbReference type="NCBI Taxonomy" id="512562"/>
    <lineage>
        <taxon>Bacteria</taxon>
        <taxon>Pseudomonadati</taxon>
        <taxon>Campylobacterota</taxon>
        <taxon>Epsilonproteobacteria</taxon>
        <taxon>Campylobacterales</taxon>
        <taxon>Helicobacteraceae</taxon>
        <taxon>Helicobacter</taxon>
    </lineage>
</organism>
<evidence type="ECO:0000255" key="1">
    <source>
        <dbReference type="HAMAP-Rule" id="MF_01307"/>
    </source>
</evidence>
<evidence type="ECO:0000305" key="2"/>
<reference key="1">
    <citation type="submission" date="2008-05" db="EMBL/GenBank/DDBJ databases">
        <title>Genome sequence of Helicobacter pylori from the remote Amazon: traces of Asian ancestry of the first Americans.</title>
        <authorList>
            <person name="Kersulyte D."/>
            <person name="Kalia A."/>
            <person name="Gilman R.H."/>
            <person name="Berg D.E."/>
        </authorList>
    </citation>
    <scope>NUCLEOTIDE SEQUENCE [LARGE SCALE GENOMIC DNA]</scope>
    <source>
        <strain>Shi470</strain>
    </source>
</reference>
<gene>
    <name evidence="1" type="primary">rpsE</name>
    <name type="ordered locus">HPSH_06735</name>
</gene>
<name>RS5_HELPS</name>
<feature type="chain" id="PRO_1000140862" description="Small ribosomal subunit protein uS5">
    <location>
        <begin position="1"/>
        <end position="153"/>
    </location>
</feature>
<feature type="domain" description="S5 DRBM" evidence="1">
    <location>
        <begin position="15"/>
        <end position="78"/>
    </location>
</feature>
<dbReference type="EMBL" id="CP001072">
    <property type="protein sequence ID" value="ACD48747.1"/>
    <property type="molecule type" value="Genomic_DNA"/>
</dbReference>
<dbReference type="SMR" id="B2UV65"/>
<dbReference type="KEGG" id="hps:HPSH_06735"/>
<dbReference type="HOGENOM" id="CLU_065898_2_2_7"/>
<dbReference type="GO" id="GO:0015935">
    <property type="term" value="C:small ribosomal subunit"/>
    <property type="evidence" value="ECO:0007669"/>
    <property type="project" value="InterPro"/>
</dbReference>
<dbReference type="GO" id="GO:0019843">
    <property type="term" value="F:rRNA binding"/>
    <property type="evidence" value="ECO:0007669"/>
    <property type="project" value="UniProtKB-UniRule"/>
</dbReference>
<dbReference type="GO" id="GO:0003735">
    <property type="term" value="F:structural constituent of ribosome"/>
    <property type="evidence" value="ECO:0007669"/>
    <property type="project" value="InterPro"/>
</dbReference>
<dbReference type="GO" id="GO:0006412">
    <property type="term" value="P:translation"/>
    <property type="evidence" value="ECO:0007669"/>
    <property type="project" value="UniProtKB-UniRule"/>
</dbReference>
<dbReference type="FunFam" id="3.30.160.20:FF:000001">
    <property type="entry name" value="30S ribosomal protein S5"/>
    <property type="match status" value="1"/>
</dbReference>
<dbReference type="FunFam" id="3.30.230.10:FF:000024">
    <property type="entry name" value="30S ribosomal protein S5"/>
    <property type="match status" value="1"/>
</dbReference>
<dbReference type="Gene3D" id="3.30.160.20">
    <property type="match status" value="1"/>
</dbReference>
<dbReference type="Gene3D" id="3.30.230.10">
    <property type="match status" value="1"/>
</dbReference>
<dbReference type="HAMAP" id="MF_01307_B">
    <property type="entry name" value="Ribosomal_uS5_B"/>
    <property type="match status" value="1"/>
</dbReference>
<dbReference type="InterPro" id="IPR020568">
    <property type="entry name" value="Ribosomal_Su5_D2-typ_SF"/>
</dbReference>
<dbReference type="InterPro" id="IPR000851">
    <property type="entry name" value="Ribosomal_uS5"/>
</dbReference>
<dbReference type="InterPro" id="IPR005712">
    <property type="entry name" value="Ribosomal_uS5_bac-type"/>
</dbReference>
<dbReference type="InterPro" id="IPR005324">
    <property type="entry name" value="Ribosomal_uS5_C"/>
</dbReference>
<dbReference type="InterPro" id="IPR013810">
    <property type="entry name" value="Ribosomal_uS5_N"/>
</dbReference>
<dbReference type="InterPro" id="IPR018192">
    <property type="entry name" value="Ribosomal_uS5_N_CS"/>
</dbReference>
<dbReference type="InterPro" id="IPR014721">
    <property type="entry name" value="Ribsml_uS5_D2-typ_fold_subgr"/>
</dbReference>
<dbReference type="NCBIfam" id="TIGR01021">
    <property type="entry name" value="rpsE_bact"/>
    <property type="match status" value="1"/>
</dbReference>
<dbReference type="PANTHER" id="PTHR48277">
    <property type="entry name" value="MITOCHONDRIAL RIBOSOMAL PROTEIN S5"/>
    <property type="match status" value="1"/>
</dbReference>
<dbReference type="PANTHER" id="PTHR48277:SF1">
    <property type="entry name" value="MITOCHONDRIAL RIBOSOMAL PROTEIN S5"/>
    <property type="match status" value="1"/>
</dbReference>
<dbReference type="Pfam" id="PF00333">
    <property type="entry name" value="Ribosomal_S5"/>
    <property type="match status" value="1"/>
</dbReference>
<dbReference type="Pfam" id="PF03719">
    <property type="entry name" value="Ribosomal_S5_C"/>
    <property type="match status" value="1"/>
</dbReference>
<dbReference type="SUPFAM" id="SSF54768">
    <property type="entry name" value="dsRNA-binding domain-like"/>
    <property type="match status" value="1"/>
</dbReference>
<dbReference type="SUPFAM" id="SSF54211">
    <property type="entry name" value="Ribosomal protein S5 domain 2-like"/>
    <property type="match status" value="1"/>
</dbReference>
<dbReference type="PROSITE" id="PS00585">
    <property type="entry name" value="RIBOSOMAL_S5"/>
    <property type="match status" value="1"/>
</dbReference>
<dbReference type="PROSITE" id="PS50881">
    <property type="entry name" value="S5_DSRBD"/>
    <property type="match status" value="1"/>
</dbReference>
<comment type="function">
    <text evidence="1">With S4 and S12 plays an important role in translational accuracy.</text>
</comment>
<comment type="function">
    <text evidence="1">Located at the back of the 30S subunit body where it stabilizes the conformation of the head with respect to the body.</text>
</comment>
<comment type="subunit">
    <text evidence="1">Part of the 30S ribosomal subunit. Contacts proteins S4 and S8.</text>
</comment>
<comment type="domain">
    <text>The N-terminal domain interacts with the head of the 30S subunit; the C-terminal domain interacts with the body and contacts protein S4. The interaction surface between S4 and S5 is involved in control of translational fidelity.</text>
</comment>
<comment type="similarity">
    <text evidence="1">Belongs to the universal ribosomal protein uS5 family.</text>
</comment>
<keyword id="KW-0687">Ribonucleoprotein</keyword>
<keyword id="KW-0689">Ribosomal protein</keyword>
<keyword id="KW-0694">RNA-binding</keyword>
<keyword id="KW-0699">rRNA-binding</keyword>